<name>FPG_JANSC</name>
<organism>
    <name type="scientific">Jannaschia sp. (strain CCS1)</name>
    <dbReference type="NCBI Taxonomy" id="290400"/>
    <lineage>
        <taxon>Bacteria</taxon>
        <taxon>Pseudomonadati</taxon>
        <taxon>Pseudomonadota</taxon>
        <taxon>Alphaproteobacteria</taxon>
        <taxon>Rhodobacterales</taxon>
        <taxon>Roseobacteraceae</taxon>
        <taxon>Jannaschia</taxon>
    </lineage>
</organism>
<evidence type="ECO:0000250" key="1"/>
<evidence type="ECO:0000255" key="2">
    <source>
        <dbReference type="HAMAP-Rule" id="MF_00103"/>
    </source>
</evidence>
<reference key="1">
    <citation type="submission" date="2006-02" db="EMBL/GenBank/DDBJ databases">
        <title>Complete sequence of chromosome of Jannaschia sp. CCS1.</title>
        <authorList>
            <consortium name="US DOE Joint Genome Institute"/>
            <person name="Copeland A."/>
            <person name="Lucas S."/>
            <person name="Lapidus A."/>
            <person name="Barry K."/>
            <person name="Detter J.C."/>
            <person name="Glavina del Rio T."/>
            <person name="Hammon N."/>
            <person name="Israni S."/>
            <person name="Pitluck S."/>
            <person name="Brettin T."/>
            <person name="Bruce D."/>
            <person name="Han C."/>
            <person name="Tapia R."/>
            <person name="Gilna P."/>
            <person name="Chertkov O."/>
            <person name="Saunders E."/>
            <person name="Schmutz J."/>
            <person name="Larimer F."/>
            <person name="Land M."/>
            <person name="Kyrpides N."/>
            <person name="Lykidis A."/>
            <person name="Moran M.A."/>
            <person name="Belas R."/>
            <person name="Ye W."/>
            <person name="Buchan A."/>
            <person name="Gonzalez J.M."/>
            <person name="Schell M.A."/>
            <person name="Richardson P."/>
        </authorList>
    </citation>
    <scope>NUCLEOTIDE SEQUENCE [LARGE SCALE GENOMIC DNA]</scope>
    <source>
        <strain>CCS1</strain>
    </source>
</reference>
<gene>
    <name evidence="2" type="primary">mutM</name>
    <name evidence="2" type="synonym">fpg</name>
    <name type="ordered locus">Jann_4210</name>
</gene>
<sequence>MPELPEVETVRRGLAPVLEGARIAQAAVNRPDLRWPFPDNMAQRLTGATVTALRRRSKYILADLDTGETLLIHLGMSGRMQISGDVIGSFHHTHPAAAKHDHVVLDTDAGARITFNDARRFGAMDLMDTATQDQHWLLRDLGPEPLGNAFNEAHLVAAFKGKRSPVKTALLDQRIVSGLGNIYVCEALWRAGISPLRQAGKIAAVRVATLVPIIRDVLTEAIEAGGSSLRDHRQATGELGYFQHTFRVYGREGQRCQTPDCAEKILRKVQSGRSSFYCPACQR</sequence>
<keyword id="KW-0227">DNA damage</keyword>
<keyword id="KW-0234">DNA repair</keyword>
<keyword id="KW-0238">DNA-binding</keyword>
<keyword id="KW-0326">Glycosidase</keyword>
<keyword id="KW-0378">Hydrolase</keyword>
<keyword id="KW-0456">Lyase</keyword>
<keyword id="KW-0479">Metal-binding</keyword>
<keyword id="KW-0511">Multifunctional enzyme</keyword>
<keyword id="KW-1185">Reference proteome</keyword>
<keyword id="KW-0862">Zinc</keyword>
<keyword id="KW-0863">Zinc-finger</keyword>
<protein>
    <recommendedName>
        <fullName evidence="2">Formamidopyrimidine-DNA glycosylase</fullName>
        <shortName evidence="2">Fapy-DNA glycosylase</shortName>
        <ecNumber evidence="2">3.2.2.23</ecNumber>
    </recommendedName>
    <alternativeName>
        <fullName evidence="2">DNA-(apurinic or apyrimidinic site) lyase MutM</fullName>
        <shortName evidence="2">AP lyase MutM</shortName>
        <ecNumber evidence="2">4.2.99.18</ecNumber>
    </alternativeName>
</protein>
<accession>Q28JI5</accession>
<feature type="initiator methionine" description="Removed" evidence="1">
    <location>
        <position position="1"/>
    </location>
</feature>
<feature type="chain" id="PRO_1000008706" description="Formamidopyrimidine-DNA glycosylase">
    <location>
        <begin position="2"/>
        <end position="283"/>
    </location>
</feature>
<feature type="zinc finger region" description="FPG-type" evidence="2">
    <location>
        <begin position="247"/>
        <end position="283"/>
    </location>
</feature>
<feature type="active site" description="Schiff-base intermediate with DNA" evidence="2">
    <location>
        <position position="2"/>
    </location>
</feature>
<feature type="active site" description="Proton donor" evidence="2">
    <location>
        <position position="3"/>
    </location>
</feature>
<feature type="active site" description="Proton donor; for beta-elimination activity" evidence="2">
    <location>
        <position position="58"/>
    </location>
</feature>
<feature type="active site" description="Proton donor; for delta-elimination activity" evidence="2">
    <location>
        <position position="273"/>
    </location>
</feature>
<feature type="binding site" evidence="2">
    <location>
        <position position="100"/>
    </location>
    <ligand>
        <name>DNA</name>
        <dbReference type="ChEBI" id="CHEBI:16991"/>
    </ligand>
</feature>
<feature type="binding site" evidence="2">
    <location>
        <position position="119"/>
    </location>
    <ligand>
        <name>DNA</name>
        <dbReference type="ChEBI" id="CHEBI:16991"/>
    </ligand>
</feature>
<feature type="binding site" evidence="2">
    <location>
        <position position="162"/>
    </location>
    <ligand>
        <name>DNA</name>
        <dbReference type="ChEBI" id="CHEBI:16991"/>
    </ligand>
</feature>
<dbReference type="EC" id="3.2.2.23" evidence="2"/>
<dbReference type="EC" id="4.2.99.18" evidence="2"/>
<dbReference type="EMBL" id="CP000264">
    <property type="protein sequence ID" value="ABD57127.1"/>
    <property type="molecule type" value="Genomic_DNA"/>
</dbReference>
<dbReference type="RefSeq" id="WP_011457323.1">
    <property type="nucleotide sequence ID" value="NC_007802.1"/>
</dbReference>
<dbReference type="SMR" id="Q28JI5"/>
<dbReference type="STRING" id="290400.Jann_4210"/>
<dbReference type="KEGG" id="jan:Jann_4210"/>
<dbReference type="eggNOG" id="COG0266">
    <property type="taxonomic scope" value="Bacteria"/>
</dbReference>
<dbReference type="HOGENOM" id="CLU_038423_1_1_5"/>
<dbReference type="OrthoDB" id="9800855at2"/>
<dbReference type="Proteomes" id="UP000008326">
    <property type="component" value="Chromosome"/>
</dbReference>
<dbReference type="GO" id="GO:0034039">
    <property type="term" value="F:8-oxo-7,8-dihydroguanine DNA N-glycosylase activity"/>
    <property type="evidence" value="ECO:0007669"/>
    <property type="project" value="TreeGrafter"/>
</dbReference>
<dbReference type="GO" id="GO:0140078">
    <property type="term" value="F:class I DNA-(apurinic or apyrimidinic site) endonuclease activity"/>
    <property type="evidence" value="ECO:0007669"/>
    <property type="project" value="UniProtKB-EC"/>
</dbReference>
<dbReference type="GO" id="GO:0003684">
    <property type="term" value="F:damaged DNA binding"/>
    <property type="evidence" value="ECO:0007669"/>
    <property type="project" value="InterPro"/>
</dbReference>
<dbReference type="GO" id="GO:0008270">
    <property type="term" value="F:zinc ion binding"/>
    <property type="evidence" value="ECO:0007669"/>
    <property type="project" value="UniProtKB-UniRule"/>
</dbReference>
<dbReference type="GO" id="GO:0006284">
    <property type="term" value="P:base-excision repair"/>
    <property type="evidence" value="ECO:0007669"/>
    <property type="project" value="InterPro"/>
</dbReference>
<dbReference type="CDD" id="cd08966">
    <property type="entry name" value="EcFpg-like_N"/>
    <property type="match status" value="1"/>
</dbReference>
<dbReference type="FunFam" id="1.10.8.50:FF:000003">
    <property type="entry name" value="Formamidopyrimidine-DNA glycosylase"/>
    <property type="match status" value="1"/>
</dbReference>
<dbReference type="Gene3D" id="1.10.8.50">
    <property type="match status" value="1"/>
</dbReference>
<dbReference type="Gene3D" id="3.20.190.10">
    <property type="entry name" value="MutM-like, N-terminal"/>
    <property type="match status" value="1"/>
</dbReference>
<dbReference type="HAMAP" id="MF_00103">
    <property type="entry name" value="Fapy_DNA_glycosyl"/>
    <property type="match status" value="1"/>
</dbReference>
<dbReference type="InterPro" id="IPR015886">
    <property type="entry name" value="DNA_glyclase/AP_lyase_DNA-bd"/>
</dbReference>
<dbReference type="InterPro" id="IPR015887">
    <property type="entry name" value="DNA_glyclase_Znf_dom_DNA_BS"/>
</dbReference>
<dbReference type="InterPro" id="IPR020629">
    <property type="entry name" value="Formamido-pyr_DNA_Glyclase"/>
</dbReference>
<dbReference type="InterPro" id="IPR012319">
    <property type="entry name" value="FPG_cat"/>
</dbReference>
<dbReference type="InterPro" id="IPR035937">
    <property type="entry name" value="MutM-like_N-ter"/>
</dbReference>
<dbReference type="InterPro" id="IPR010979">
    <property type="entry name" value="Ribosomal_uS13-like_H2TH"/>
</dbReference>
<dbReference type="InterPro" id="IPR000214">
    <property type="entry name" value="Znf_DNA_glyclase/AP_lyase"/>
</dbReference>
<dbReference type="NCBIfam" id="TIGR00577">
    <property type="entry name" value="fpg"/>
    <property type="match status" value="1"/>
</dbReference>
<dbReference type="NCBIfam" id="NF002211">
    <property type="entry name" value="PRK01103.1"/>
    <property type="match status" value="1"/>
</dbReference>
<dbReference type="PANTHER" id="PTHR22993">
    <property type="entry name" value="FORMAMIDOPYRIMIDINE-DNA GLYCOSYLASE"/>
    <property type="match status" value="1"/>
</dbReference>
<dbReference type="PANTHER" id="PTHR22993:SF9">
    <property type="entry name" value="FORMAMIDOPYRIMIDINE-DNA GLYCOSYLASE"/>
    <property type="match status" value="1"/>
</dbReference>
<dbReference type="Pfam" id="PF01149">
    <property type="entry name" value="Fapy_DNA_glyco"/>
    <property type="match status" value="1"/>
</dbReference>
<dbReference type="Pfam" id="PF06831">
    <property type="entry name" value="H2TH"/>
    <property type="match status" value="1"/>
</dbReference>
<dbReference type="SMART" id="SM00898">
    <property type="entry name" value="Fapy_DNA_glyco"/>
    <property type="match status" value="1"/>
</dbReference>
<dbReference type="SMART" id="SM01232">
    <property type="entry name" value="H2TH"/>
    <property type="match status" value="1"/>
</dbReference>
<dbReference type="SUPFAM" id="SSF57716">
    <property type="entry name" value="Glucocorticoid receptor-like (DNA-binding domain)"/>
    <property type="match status" value="1"/>
</dbReference>
<dbReference type="SUPFAM" id="SSF81624">
    <property type="entry name" value="N-terminal domain of MutM-like DNA repair proteins"/>
    <property type="match status" value="1"/>
</dbReference>
<dbReference type="SUPFAM" id="SSF46946">
    <property type="entry name" value="S13-like H2TH domain"/>
    <property type="match status" value="1"/>
</dbReference>
<dbReference type="PROSITE" id="PS51068">
    <property type="entry name" value="FPG_CAT"/>
    <property type="match status" value="1"/>
</dbReference>
<dbReference type="PROSITE" id="PS01242">
    <property type="entry name" value="ZF_FPG_1"/>
    <property type="match status" value="1"/>
</dbReference>
<dbReference type="PROSITE" id="PS51066">
    <property type="entry name" value="ZF_FPG_2"/>
    <property type="match status" value="1"/>
</dbReference>
<comment type="function">
    <text evidence="2">Involved in base excision repair of DNA damaged by oxidation or by mutagenic agents. Acts as a DNA glycosylase that recognizes and removes damaged bases. Has a preference for oxidized purines, such as 7,8-dihydro-8-oxoguanine (8-oxoG). Has AP (apurinic/apyrimidinic) lyase activity and introduces nicks in the DNA strand. Cleaves the DNA backbone by beta-delta elimination to generate a single-strand break at the site of the removed base with both 3'- and 5'-phosphates.</text>
</comment>
<comment type="catalytic activity">
    <reaction evidence="2">
        <text>Hydrolysis of DNA containing ring-opened 7-methylguanine residues, releasing 2,6-diamino-4-hydroxy-5-(N-methyl)formamidopyrimidine.</text>
        <dbReference type="EC" id="3.2.2.23"/>
    </reaction>
</comment>
<comment type="catalytic activity">
    <reaction evidence="2">
        <text>2'-deoxyribonucleotide-(2'-deoxyribose 5'-phosphate)-2'-deoxyribonucleotide-DNA = a 3'-end 2'-deoxyribonucleotide-(2,3-dehydro-2,3-deoxyribose 5'-phosphate)-DNA + a 5'-end 5'-phospho-2'-deoxyribonucleoside-DNA + H(+)</text>
        <dbReference type="Rhea" id="RHEA:66592"/>
        <dbReference type="Rhea" id="RHEA-COMP:13180"/>
        <dbReference type="Rhea" id="RHEA-COMP:16897"/>
        <dbReference type="Rhea" id="RHEA-COMP:17067"/>
        <dbReference type="ChEBI" id="CHEBI:15378"/>
        <dbReference type="ChEBI" id="CHEBI:136412"/>
        <dbReference type="ChEBI" id="CHEBI:157695"/>
        <dbReference type="ChEBI" id="CHEBI:167181"/>
        <dbReference type="EC" id="4.2.99.18"/>
    </reaction>
</comment>
<comment type="cofactor">
    <cofactor evidence="2">
        <name>Zn(2+)</name>
        <dbReference type="ChEBI" id="CHEBI:29105"/>
    </cofactor>
    <text evidence="2">Binds 1 zinc ion per subunit.</text>
</comment>
<comment type="subunit">
    <text evidence="2">Monomer.</text>
</comment>
<comment type="similarity">
    <text evidence="2">Belongs to the FPG family.</text>
</comment>
<proteinExistence type="inferred from homology"/>